<gene>
    <name evidence="1" type="primary">fdhD</name>
    <name type="ordered locus">SDY_3848</name>
</gene>
<name>FDHD_SHIDS</name>
<feature type="chain" id="PRO_1000020819" description="Sulfur carrier protein FdhD">
    <location>
        <begin position="1"/>
        <end position="277"/>
    </location>
</feature>
<feature type="active site" description="Cysteine persulfide intermediate" evidence="1">
    <location>
        <position position="121"/>
    </location>
</feature>
<feature type="binding site" evidence="1">
    <location>
        <begin position="260"/>
        <end position="265"/>
    </location>
    <ligand>
        <name>Mo-bis(molybdopterin guanine dinucleotide)</name>
        <dbReference type="ChEBI" id="CHEBI:60539"/>
    </ligand>
</feature>
<reference key="1">
    <citation type="journal article" date="2005" name="Nucleic Acids Res.">
        <title>Genome dynamics and diversity of Shigella species, the etiologic agents of bacillary dysentery.</title>
        <authorList>
            <person name="Yang F."/>
            <person name="Yang J."/>
            <person name="Zhang X."/>
            <person name="Chen L."/>
            <person name="Jiang Y."/>
            <person name="Yan Y."/>
            <person name="Tang X."/>
            <person name="Wang J."/>
            <person name="Xiong Z."/>
            <person name="Dong J."/>
            <person name="Xue Y."/>
            <person name="Zhu Y."/>
            <person name="Xu X."/>
            <person name="Sun L."/>
            <person name="Chen S."/>
            <person name="Nie H."/>
            <person name="Peng J."/>
            <person name="Xu J."/>
            <person name="Wang Y."/>
            <person name="Yuan Z."/>
            <person name="Wen Y."/>
            <person name="Yao Z."/>
            <person name="Shen Y."/>
            <person name="Qiang B."/>
            <person name="Hou Y."/>
            <person name="Yu J."/>
            <person name="Jin Q."/>
        </authorList>
    </citation>
    <scope>NUCLEOTIDE SEQUENCE [LARGE SCALE GENOMIC DNA]</scope>
    <source>
        <strain>Sd197</strain>
    </source>
</reference>
<organism>
    <name type="scientific">Shigella dysenteriae serotype 1 (strain Sd197)</name>
    <dbReference type="NCBI Taxonomy" id="300267"/>
    <lineage>
        <taxon>Bacteria</taxon>
        <taxon>Pseudomonadati</taxon>
        <taxon>Pseudomonadota</taxon>
        <taxon>Gammaproteobacteria</taxon>
        <taxon>Enterobacterales</taxon>
        <taxon>Enterobacteriaceae</taxon>
        <taxon>Shigella</taxon>
    </lineage>
</organism>
<protein>
    <recommendedName>
        <fullName evidence="1">Sulfur carrier protein FdhD</fullName>
    </recommendedName>
</protein>
<accession>Q32A65</accession>
<comment type="function">
    <text evidence="1">Required for formate dehydrogenase (FDH) activity. Acts as a sulfur carrier protein that transfers sulfur from IscS to the molybdenum cofactor prior to its insertion into FDH.</text>
</comment>
<comment type="subcellular location">
    <subcellularLocation>
        <location evidence="1">Cytoplasm</location>
    </subcellularLocation>
</comment>
<comment type="similarity">
    <text evidence="1">Belongs to the FdhD family.</text>
</comment>
<proteinExistence type="inferred from homology"/>
<sequence length="277" mass="30562">MKKTQQKEIENVTNITGVRQIELWRRDDLQHPRLDEVAEEVPVALVYNGISHVVMMASPKDLEYFALGFSLSEGIIESPRDIFGMDVVPSCNGLEVQIELSSRRFMGLKERRRALAGRTGCGVCGVEQLNDIGKPVQPLPFTQTFDLNKLDDALRHLNDFQPVGQLTSCTHAAAWMLPSGELVGGHEDVGRHVALDKLLGRRSQEGESWQQGAVLVSSRASYEMVQKSAMCGVEILFAVSAATTLAVEVAERCNLTLVGFCKPGRATVYTHPQRLSN</sequence>
<keyword id="KW-0963">Cytoplasm</keyword>
<keyword id="KW-0501">Molybdenum cofactor biosynthesis</keyword>
<keyword id="KW-1185">Reference proteome</keyword>
<dbReference type="EMBL" id="CP000034">
    <property type="protein sequence ID" value="ABB63790.1"/>
    <property type="molecule type" value="Genomic_DNA"/>
</dbReference>
<dbReference type="RefSeq" id="WP_000753591.1">
    <property type="nucleotide sequence ID" value="NC_007606.1"/>
</dbReference>
<dbReference type="RefSeq" id="YP_405281.1">
    <property type="nucleotide sequence ID" value="NC_007606.1"/>
</dbReference>
<dbReference type="SMR" id="Q32A65"/>
<dbReference type="STRING" id="300267.SDY_3848"/>
<dbReference type="EnsemblBacteria" id="ABB63790">
    <property type="protein sequence ID" value="ABB63790"/>
    <property type="gene ID" value="SDY_3848"/>
</dbReference>
<dbReference type="KEGG" id="sdy:SDY_3848"/>
<dbReference type="PATRIC" id="fig|300267.13.peg.4547"/>
<dbReference type="HOGENOM" id="CLU_056887_2_0_6"/>
<dbReference type="Proteomes" id="UP000002716">
    <property type="component" value="Chromosome"/>
</dbReference>
<dbReference type="GO" id="GO:0005737">
    <property type="term" value="C:cytoplasm"/>
    <property type="evidence" value="ECO:0007669"/>
    <property type="project" value="UniProtKB-SubCell"/>
</dbReference>
<dbReference type="GO" id="GO:0097163">
    <property type="term" value="F:sulfur carrier activity"/>
    <property type="evidence" value="ECO:0007669"/>
    <property type="project" value="UniProtKB-UniRule"/>
</dbReference>
<dbReference type="GO" id="GO:0016783">
    <property type="term" value="F:sulfurtransferase activity"/>
    <property type="evidence" value="ECO:0007669"/>
    <property type="project" value="InterPro"/>
</dbReference>
<dbReference type="GO" id="GO:0006777">
    <property type="term" value="P:Mo-molybdopterin cofactor biosynthetic process"/>
    <property type="evidence" value="ECO:0007669"/>
    <property type="project" value="UniProtKB-UniRule"/>
</dbReference>
<dbReference type="FunFam" id="3.10.20.10:FF:000003">
    <property type="entry name" value="Sulfur carrier protein FdhD"/>
    <property type="match status" value="1"/>
</dbReference>
<dbReference type="FunFam" id="3.40.140.10:FF:000027">
    <property type="entry name" value="Sulfur carrier protein FdhD"/>
    <property type="match status" value="1"/>
</dbReference>
<dbReference type="Gene3D" id="3.10.20.10">
    <property type="match status" value="1"/>
</dbReference>
<dbReference type="Gene3D" id="3.40.140.10">
    <property type="entry name" value="Cytidine Deaminase, domain 2"/>
    <property type="match status" value="1"/>
</dbReference>
<dbReference type="HAMAP" id="MF_00187">
    <property type="entry name" value="FdhD"/>
    <property type="match status" value="1"/>
</dbReference>
<dbReference type="InterPro" id="IPR016193">
    <property type="entry name" value="Cytidine_deaminase-like"/>
</dbReference>
<dbReference type="InterPro" id="IPR003786">
    <property type="entry name" value="FdhD"/>
</dbReference>
<dbReference type="NCBIfam" id="TIGR00129">
    <property type="entry name" value="fdhD_narQ"/>
    <property type="match status" value="1"/>
</dbReference>
<dbReference type="PANTHER" id="PTHR30592">
    <property type="entry name" value="FORMATE DEHYDROGENASE"/>
    <property type="match status" value="1"/>
</dbReference>
<dbReference type="PANTHER" id="PTHR30592:SF1">
    <property type="entry name" value="SULFUR CARRIER PROTEIN FDHD"/>
    <property type="match status" value="1"/>
</dbReference>
<dbReference type="Pfam" id="PF02634">
    <property type="entry name" value="FdhD-NarQ"/>
    <property type="match status" value="1"/>
</dbReference>
<dbReference type="PIRSF" id="PIRSF015626">
    <property type="entry name" value="FdhD"/>
    <property type="match status" value="1"/>
</dbReference>
<dbReference type="SUPFAM" id="SSF53927">
    <property type="entry name" value="Cytidine deaminase-like"/>
    <property type="match status" value="1"/>
</dbReference>
<evidence type="ECO:0000255" key="1">
    <source>
        <dbReference type="HAMAP-Rule" id="MF_00187"/>
    </source>
</evidence>